<organism>
    <name type="scientific">Escherichia coli O81 (strain ED1a)</name>
    <dbReference type="NCBI Taxonomy" id="585397"/>
    <lineage>
        <taxon>Bacteria</taxon>
        <taxon>Pseudomonadati</taxon>
        <taxon>Pseudomonadota</taxon>
        <taxon>Gammaproteobacteria</taxon>
        <taxon>Enterobacterales</taxon>
        <taxon>Enterobacteriaceae</taxon>
        <taxon>Escherichia</taxon>
    </lineage>
</organism>
<protein>
    <recommendedName>
        <fullName evidence="1">Spermidine export protein MdtI</fullName>
    </recommendedName>
</protein>
<evidence type="ECO:0000255" key="1">
    <source>
        <dbReference type="HAMAP-Rule" id="MF_01597"/>
    </source>
</evidence>
<proteinExistence type="inferred from homology"/>
<sequence>MAQFEWVHAAWLALAIVLEIVANVFLKFSDGFRCKIFGLLSLAAVLAAFSALSQAVKGIDLSVAYALWGGFGIAATLAAGWILFGQRLNRKGWIGLVLLLAGMIMVKLA</sequence>
<comment type="function">
    <text evidence="1">Catalyzes the excretion of spermidine.</text>
</comment>
<comment type="subunit">
    <text evidence="1">Forms a complex with MdtJ.</text>
</comment>
<comment type="subcellular location">
    <subcellularLocation>
        <location evidence="1">Cell inner membrane</location>
        <topology evidence="1">Multi-pass membrane protein</topology>
    </subcellularLocation>
</comment>
<comment type="similarity">
    <text evidence="1">Belongs to the drug/metabolite transporter (DMT) superfamily. Small multidrug resistance (SMR) (TC 2.A.7.1) family. MdtI subfamily.</text>
</comment>
<name>MDTI_ECO81</name>
<keyword id="KW-0997">Cell inner membrane</keyword>
<keyword id="KW-1003">Cell membrane</keyword>
<keyword id="KW-0472">Membrane</keyword>
<keyword id="KW-0812">Transmembrane</keyword>
<keyword id="KW-1133">Transmembrane helix</keyword>
<keyword id="KW-0813">Transport</keyword>
<gene>
    <name evidence="1" type="primary">mdtI</name>
    <name type="ordered locus">ECED1_1768</name>
</gene>
<accession>B7MV45</accession>
<feature type="chain" id="PRO_1000185770" description="Spermidine export protein MdtI">
    <location>
        <begin position="1"/>
        <end position="109"/>
    </location>
</feature>
<feature type="transmembrane region" description="Helical" evidence="1">
    <location>
        <begin position="6"/>
        <end position="26"/>
    </location>
</feature>
<feature type="transmembrane region" description="Helical" evidence="1">
    <location>
        <begin position="36"/>
        <end position="56"/>
    </location>
</feature>
<feature type="transmembrane region" description="Helical" evidence="1">
    <location>
        <begin position="64"/>
        <end position="84"/>
    </location>
</feature>
<feature type="transmembrane region" description="Helical" evidence="1">
    <location>
        <begin position="88"/>
        <end position="108"/>
    </location>
</feature>
<reference key="1">
    <citation type="journal article" date="2009" name="PLoS Genet.">
        <title>Organised genome dynamics in the Escherichia coli species results in highly diverse adaptive paths.</title>
        <authorList>
            <person name="Touchon M."/>
            <person name="Hoede C."/>
            <person name="Tenaillon O."/>
            <person name="Barbe V."/>
            <person name="Baeriswyl S."/>
            <person name="Bidet P."/>
            <person name="Bingen E."/>
            <person name="Bonacorsi S."/>
            <person name="Bouchier C."/>
            <person name="Bouvet O."/>
            <person name="Calteau A."/>
            <person name="Chiapello H."/>
            <person name="Clermont O."/>
            <person name="Cruveiller S."/>
            <person name="Danchin A."/>
            <person name="Diard M."/>
            <person name="Dossat C."/>
            <person name="Karoui M.E."/>
            <person name="Frapy E."/>
            <person name="Garry L."/>
            <person name="Ghigo J.M."/>
            <person name="Gilles A.M."/>
            <person name="Johnson J."/>
            <person name="Le Bouguenec C."/>
            <person name="Lescat M."/>
            <person name="Mangenot S."/>
            <person name="Martinez-Jehanne V."/>
            <person name="Matic I."/>
            <person name="Nassif X."/>
            <person name="Oztas S."/>
            <person name="Petit M.A."/>
            <person name="Pichon C."/>
            <person name="Rouy Z."/>
            <person name="Ruf C.S."/>
            <person name="Schneider D."/>
            <person name="Tourret J."/>
            <person name="Vacherie B."/>
            <person name="Vallenet D."/>
            <person name="Medigue C."/>
            <person name="Rocha E.P.C."/>
            <person name="Denamur E."/>
        </authorList>
    </citation>
    <scope>NUCLEOTIDE SEQUENCE [LARGE SCALE GENOMIC DNA]</scope>
    <source>
        <strain>ED1a</strain>
    </source>
</reference>
<dbReference type="EMBL" id="CU928162">
    <property type="protein sequence ID" value="CAR07961.2"/>
    <property type="molecule type" value="Genomic_DNA"/>
</dbReference>
<dbReference type="RefSeq" id="WP_000046660.1">
    <property type="nucleotide sequence ID" value="NC_011745.1"/>
</dbReference>
<dbReference type="SMR" id="B7MV45"/>
<dbReference type="KEGG" id="ecq:ECED1_1768"/>
<dbReference type="HOGENOM" id="CLU_133067_0_4_6"/>
<dbReference type="Proteomes" id="UP000000748">
    <property type="component" value="Chromosome"/>
</dbReference>
<dbReference type="GO" id="GO:0005886">
    <property type="term" value="C:plasma membrane"/>
    <property type="evidence" value="ECO:0007669"/>
    <property type="project" value="UniProtKB-SubCell"/>
</dbReference>
<dbReference type="GO" id="GO:0015199">
    <property type="term" value="F:amino-acid betaine transmembrane transporter activity"/>
    <property type="evidence" value="ECO:0007669"/>
    <property type="project" value="TreeGrafter"/>
</dbReference>
<dbReference type="GO" id="GO:0015297">
    <property type="term" value="F:antiporter activity"/>
    <property type="evidence" value="ECO:0007669"/>
    <property type="project" value="TreeGrafter"/>
</dbReference>
<dbReference type="GO" id="GO:0015220">
    <property type="term" value="F:choline transmembrane transporter activity"/>
    <property type="evidence" value="ECO:0007669"/>
    <property type="project" value="TreeGrafter"/>
</dbReference>
<dbReference type="GO" id="GO:0015606">
    <property type="term" value="F:spermidine transmembrane transporter activity"/>
    <property type="evidence" value="ECO:0007669"/>
    <property type="project" value="UniProtKB-UniRule"/>
</dbReference>
<dbReference type="GO" id="GO:0031460">
    <property type="term" value="P:glycine betaine transport"/>
    <property type="evidence" value="ECO:0007669"/>
    <property type="project" value="TreeGrafter"/>
</dbReference>
<dbReference type="FunFam" id="1.10.3730.20:FF:000001">
    <property type="entry name" value="Quaternary ammonium compound resistance transporter SugE"/>
    <property type="match status" value="1"/>
</dbReference>
<dbReference type="Gene3D" id="1.10.3730.20">
    <property type="match status" value="1"/>
</dbReference>
<dbReference type="HAMAP" id="MF_01597">
    <property type="entry name" value="MdtI"/>
    <property type="match status" value="1"/>
</dbReference>
<dbReference type="InterPro" id="IPR000390">
    <property type="entry name" value="Small_drug/metabolite_transptr"/>
</dbReference>
<dbReference type="InterPro" id="IPR045324">
    <property type="entry name" value="Small_multidrug_res"/>
</dbReference>
<dbReference type="InterPro" id="IPR023737">
    <property type="entry name" value="Spermidine_export_MdtI"/>
</dbReference>
<dbReference type="NCBIfam" id="NF007934">
    <property type="entry name" value="PRK10650.1"/>
    <property type="match status" value="1"/>
</dbReference>
<dbReference type="PANTHER" id="PTHR30561">
    <property type="entry name" value="SMR FAMILY PROTON-DEPENDENT DRUG EFFLUX TRANSPORTER SUGE"/>
    <property type="match status" value="1"/>
</dbReference>
<dbReference type="PANTHER" id="PTHR30561:SF6">
    <property type="entry name" value="SPERMIDINE EXPORT PROTEIN MDTI"/>
    <property type="match status" value="1"/>
</dbReference>
<dbReference type="Pfam" id="PF00893">
    <property type="entry name" value="Multi_Drug_Res"/>
    <property type="match status" value="1"/>
</dbReference>
<dbReference type="SUPFAM" id="SSF103481">
    <property type="entry name" value="Multidrug resistance efflux transporter EmrE"/>
    <property type="match status" value="1"/>
</dbReference>